<comment type="function">
    <text evidence="1">Large subunit of the glutamine-dependent carbamoyl phosphate synthetase (CPSase). CPSase catalyzes the formation of carbamoyl phosphate from the ammonia moiety of glutamine, carbonate, and phosphate donated by ATP, constituting the first step of 2 biosynthetic pathways, one leading to arginine and/or urea and the other to pyrimidine nucleotides. The large subunit (synthetase) binds the substrates ammonia (free or transferred from glutamine from the small subunit), hydrogencarbonate and ATP and carries out an ATP-coupled ligase reaction, activating hydrogencarbonate by forming carboxy phosphate which reacts with ammonia to form carbamoyl phosphate.</text>
</comment>
<comment type="catalytic activity">
    <reaction evidence="1">
        <text>hydrogencarbonate + L-glutamine + 2 ATP + H2O = carbamoyl phosphate + L-glutamate + 2 ADP + phosphate + 2 H(+)</text>
        <dbReference type="Rhea" id="RHEA:18633"/>
        <dbReference type="ChEBI" id="CHEBI:15377"/>
        <dbReference type="ChEBI" id="CHEBI:15378"/>
        <dbReference type="ChEBI" id="CHEBI:17544"/>
        <dbReference type="ChEBI" id="CHEBI:29985"/>
        <dbReference type="ChEBI" id="CHEBI:30616"/>
        <dbReference type="ChEBI" id="CHEBI:43474"/>
        <dbReference type="ChEBI" id="CHEBI:58228"/>
        <dbReference type="ChEBI" id="CHEBI:58359"/>
        <dbReference type="ChEBI" id="CHEBI:456216"/>
        <dbReference type="EC" id="6.3.5.5"/>
    </reaction>
</comment>
<comment type="catalytic activity">
    <molecule>Carbamoyl phosphate synthase large chain</molecule>
    <reaction evidence="1">
        <text>hydrogencarbonate + NH4(+) + 2 ATP = carbamoyl phosphate + 2 ADP + phosphate + 2 H(+)</text>
        <dbReference type="Rhea" id="RHEA:18029"/>
        <dbReference type="ChEBI" id="CHEBI:15378"/>
        <dbReference type="ChEBI" id="CHEBI:17544"/>
        <dbReference type="ChEBI" id="CHEBI:28938"/>
        <dbReference type="ChEBI" id="CHEBI:30616"/>
        <dbReference type="ChEBI" id="CHEBI:43474"/>
        <dbReference type="ChEBI" id="CHEBI:58228"/>
        <dbReference type="ChEBI" id="CHEBI:456216"/>
        <dbReference type="EC" id="6.3.4.16"/>
    </reaction>
</comment>
<comment type="cofactor">
    <cofactor evidence="1">
        <name>Mg(2+)</name>
        <dbReference type="ChEBI" id="CHEBI:18420"/>
    </cofactor>
    <cofactor evidence="1">
        <name>Mn(2+)</name>
        <dbReference type="ChEBI" id="CHEBI:29035"/>
    </cofactor>
    <text evidence="1">Binds 4 Mg(2+) or Mn(2+) ions per subunit.</text>
</comment>
<comment type="pathway">
    <text evidence="1">Amino-acid biosynthesis; L-arginine biosynthesis; carbamoyl phosphate from bicarbonate: step 1/1.</text>
</comment>
<comment type="pathway">
    <text evidence="1">Pyrimidine metabolism; UMP biosynthesis via de novo pathway; (S)-dihydroorotate from bicarbonate: step 1/3.</text>
</comment>
<comment type="subunit">
    <text evidence="1">Composed of two chains; the small (or glutamine) chain promotes the hydrolysis of glutamine to ammonia, which is used by the large (or ammonia) chain to synthesize carbamoyl phosphate. Tetramer of heterodimers (alpha,beta)4.</text>
</comment>
<comment type="domain">
    <text evidence="1">The large subunit is composed of 2 ATP-grasp domains that are involved in binding the 2 ATP molecules needed for carbamoyl phosphate synthesis. The N-terminal ATP-grasp domain (referred to as the carboxyphosphate synthetic component) catalyzes the ATP-dependent phosphorylation of hydrogencarbonate to carboxyphosphate and the subsequent nucleophilic attack by ammonia to form a carbamate intermediate. The C-terminal ATP-grasp domain (referred to as the carbamoyl phosphate synthetic component) then catalyzes the phosphorylation of carbamate with the second ATP to form the end product carbamoyl phosphate. The reactive and unstable enzyme intermediates are sequentially channeled from one active site to the next through the interior of the protein over a distance of at least 96 A.</text>
</comment>
<comment type="similarity">
    <text evidence="1">Belongs to the CarB family.</text>
</comment>
<accession>C0M756</accession>
<proteinExistence type="inferred from homology"/>
<evidence type="ECO:0000255" key="1">
    <source>
        <dbReference type="HAMAP-Rule" id="MF_01210"/>
    </source>
</evidence>
<name>CARB_STRE4</name>
<reference key="1">
    <citation type="journal article" date="2009" name="PLoS Pathog.">
        <title>Genomic evidence for the evolution of Streptococcus equi: host restriction, increased virulence, and genetic exchange with human pathogens.</title>
        <authorList>
            <person name="Holden M.T.G."/>
            <person name="Heather Z."/>
            <person name="Paillot R."/>
            <person name="Steward K.F."/>
            <person name="Webb K."/>
            <person name="Ainslie F."/>
            <person name="Jourdan T."/>
            <person name="Bason N.C."/>
            <person name="Holroyd N.E."/>
            <person name="Mungall K."/>
            <person name="Quail M.A."/>
            <person name="Sanders M."/>
            <person name="Simmonds M."/>
            <person name="Willey D."/>
            <person name="Brooks K."/>
            <person name="Aanensen D.M."/>
            <person name="Spratt B.G."/>
            <person name="Jolley K.A."/>
            <person name="Maiden M.C.J."/>
            <person name="Kehoe M."/>
            <person name="Chanter N."/>
            <person name="Bentley S.D."/>
            <person name="Robinson C."/>
            <person name="Maskell D.J."/>
            <person name="Parkhill J."/>
            <person name="Waller A.S."/>
        </authorList>
    </citation>
    <scope>NUCLEOTIDE SEQUENCE [LARGE SCALE GENOMIC DNA]</scope>
    <source>
        <strain>4047</strain>
    </source>
</reference>
<gene>
    <name evidence="1" type="primary">carB</name>
    <name type="ordered locus">SEQ_1313</name>
</gene>
<feature type="chain" id="PRO_1000164715" description="Carbamoyl phosphate synthase large chain">
    <location>
        <begin position="1"/>
        <end position="1058"/>
    </location>
</feature>
<feature type="domain" description="ATP-grasp 1" evidence="1">
    <location>
        <begin position="133"/>
        <end position="327"/>
    </location>
</feature>
<feature type="domain" description="ATP-grasp 2" evidence="1">
    <location>
        <begin position="671"/>
        <end position="861"/>
    </location>
</feature>
<feature type="domain" description="MGS-like" evidence="1">
    <location>
        <begin position="930"/>
        <end position="1058"/>
    </location>
</feature>
<feature type="region of interest" description="Carboxyphosphate synthetic domain" evidence="1">
    <location>
        <begin position="1"/>
        <end position="401"/>
    </location>
</feature>
<feature type="region of interest" description="Oligomerization domain" evidence="1">
    <location>
        <begin position="402"/>
        <end position="546"/>
    </location>
</feature>
<feature type="region of interest" description="Carbamoyl phosphate synthetic domain" evidence="1">
    <location>
        <begin position="547"/>
        <end position="929"/>
    </location>
</feature>
<feature type="region of interest" description="Allosteric domain" evidence="1">
    <location>
        <begin position="930"/>
        <end position="1058"/>
    </location>
</feature>
<feature type="binding site" evidence="1">
    <location>
        <position position="129"/>
    </location>
    <ligand>
        <name>ATP</name>
        <dbReference type="ChEBI" id="CHEBI:30616"/>
        <label>1</label>
    </ligand>
</feature>
<feature type="binding site" evidence="1">
    <location>
        <position position="169"/>
    </location>
    <ligand>
        <name>ATP</name>
        <dbReference type="ChEBI" id="CHEBI:30616"/>
        <label>1</label>
    </ligand>
</feature>
<feature type="binding site" evidence="1">
    <location>
        <position position="175"/>
    </location>
    <ligand>
        <name>ATP</name>
        <dbReference type="ChEBI" id="CHEBI:30616"/>
        <label>1</label>
    </ligand>
</feature>
<feature type="binding site" evidence="1">
    <location>
        <position position="176"/>
    </location>
    <ligand>
        <name>ATP</name>
        <dbReference type="ChEBI" id="CHEBI:30616"/>
        <label>1</label>
    </ligand>
</feature>
<feature type="binding site" evidence="1">
    <location>
        <position position="208"/>
    </location>
    <ligand>
        <name>ATP</name>
        <dbReference type="ChEBI" id="CHEBI:30616"/>
        <label>1</label>
    </ligand>
</feature>
<feature type="binding site" evidence="1">
    <location>
        <position position="210"/>
    </location>
    <ligand>
        <name>ATP</name>
        <dbReference type="ChEBI" id="CHEBI:30616"/>
        <label>1</label>
    </ligand>
</feature>
<feature type="binding site" evidence="1">
    <location>
        <position position="215"/>
    </location>
    <ligand>
        <name>ATP</name>
        <dbReference type="ChEBI" id="CHEBI:30616"/>
        <label>1</label>
    </ligand>
</feature>
<feature type="binding site" evidence="1">
    <location>
        <position position="241"/>
    </location>
    <ligand>
        <name>ATP</name>
        <dbReference type="ChEBI" id="CHEBI:30616"/>
        <label>1</label>
    </ligand>
</feature>
<feature type="binding site" evidence="1">
    <location>
        <position position="242"/>
    </location>
    <ligand>
        <name>ATP</name>
        <dbReference type="ChEBI" id="CHEBI:30616"/>
        <label>1</label>
    </ligand>
</feature>
<feature type="binding site" evidence="1">
    <location>
        <position position="243"/>
    </location>
    <ligand>
        <name>ATP</name>
        <dbReference type="ChEBI" id="CHEBI:30616"/>
        <label>1</label>
    </ligand>
</feature>
<feature type="binding site" evidence="1">
    <location>
        <position position="284"/>
    </location>
    <ligand>
        <name>ATP</name>
        <dbReference type="ChEBI" id="CHEBI:30616"/>
        <label>1</label>
    </ligand>
</feature>
<feature type="binding site" evidence="1">
    <location>
        <position position="284"/>
    </location>
    <ligand>
        <name>Mg(2+)</name>
        <dbReference type="ChEBI" id="CHEBI:18420"/>
        <label>1</label>
    </ligand>
</feature>
<feature type="binding site" evidence="1">
    <location>
        <position position="284"/>
    </location>
    <ligand>
        <name>Mn(2+)</name>
        <dbReference type="ChEBI" id="CHEBI:29035"/>
        <label>1</label>
    </ligand>
</feature>
<feature type="binding site" evidence="1">
    <location>
        <position position="298"/>
    </location>
    <ligand>
        <name>ATP</name>
        <dbReference type="ChEBI" id="CHEBI:30616"/>
        <label>1</label>
    </ligand>
</feature>
<feature type="binding site" evidence="1">
    <location>
        <position position="298"/>
    </location>
    <ligand>
        <name>Mg(2+)</name>
        <dbReference type="ChEBI" id="CHEBI:18420"/>
        <label>1</label>
    </ligand>
</feature>
<feature type="binding site" evidence="1">
    <location>
        <position position="298"/>
    </location>
    <ligand>
        <name>Mg(2+)</name>
        <dbReference type="ChEBI" id="CHEBI:18420"/>
        <label>2</label>
    </ligand>
</feature>
<feature type="binding site" evidence="1">
    <location>
        <position position="298"/>
    </location>
    <ligand>
        <name>Mn(2+)</name>
        <dbReference type="ChEBI" id="CHEBI:29035"/>
        <label>1</label>
    </ligand>
</feature>
<feature type="binding site" evidence="1">
    <location>
        <position position="298"/>
    </location>
    <ligand>
        <name>Mn(2+)</name>
        <dbReference type="ChEBI" id="CHEBI:29035"/>
        <label>2</label>
    </ligand>
</feature>
<feature type="binding site" evidence="1">
    <location>
        <position position="300"/>
    </location>
    <ligand>
        <name>Mg(2+)</name>
        <dbReference type="ChEBI" id="CHEBI:18420"/>
        <label>2</label>
    </ligand>
</feature>
<feature type="binding site" evidence="1">
    <location>
        <position position="300"/>
    </location>
    <ligand>
        <name>Mn(2+)</name>
        <dbReference type="ChEBI" id="CHEBI:29035"/>
        <label>2</label>
    </ligand>
</feature>
<feature type="binding site" evidence="1">
    <location>
        <position position="707"/>
    </location>
    <ligand>
        <name>ATP</name>
        <dbReference type="ChEBI" id="CHEBI:30616"/>
        <label>2</label>
    </ligand>
</feature>
<feature type="binding site" evidence="1">
    <location>
        <position position="746"/>
    </location>
    <ligand>
        <name>ATP</name>
        <dbReference type="ChEBI" id="CHEBI:30616"/>
        <label>2</label>
    </ligand>
</feature>
<feature type="binding site" evidence="1">
    <location>
        <position position="748"/>
    </location>
    <ligand>
        <name>ATP</name>
        <dbReference type="ChEBI" id="CHEBI:30616"/>
        <label>2</label>
    </ligand>
</feature>
<feature type="binding site" evidence="1">
    <location>
        <position position="752"/>
    </location>
    <ligand>
        <name>ATP</name>
        <dbReference type="ChEBI" id="CHEBI:30616"/>
        <label>2</label>
    </ligand>
</feature>
<feature type="binding site" evidence="1">
    <location>
        <position position="777"/>
    </location>
    <ligand>
        <name>ATP</name>
        <dbReference type="ChEBI" id="CHEBI:30616"/>
        <label>2</label>
    </ligand>
</feature>
<feature type="binding site" evidence="1">
    <location>
        <position position="778"/>
    </location>
    <ligand>
        <name>ATP</name>
        <dbReference type="ChEBI" id="CHEBI:30616"/>
        <label>2</label>
    </ligand>
</feature>
<feature type="binding site" evidence="1">
    <location>
        <position position="779"/>
    </location>
    <ligand>
        <name>ATP</name>
        <dbReference type="ChEBI" id="CHEBI:30616"/>
        <label>2</label>
    </ligand>
</feature>
<feature type="binding site" evidence="1">
    <location>
        <position position="780"/>
    </location>
    <ligand>
        <name>ATP</name>
        <dbReference type="ChEBI" id="CHEBI:30616"/>
        <label>2</label>
    </ligand>
</feature>
<feature type="binding site" evidence="1">
    <location>
        <position position="820"/>
    </location>
    <ligand>
        <name>ATP</name>
        <dbReference type="ChEBI" id="CHEBI:30616"/>
        <label>2</label>
    </ligand>
</feature>
<feature type="binding site" evidence="1">
    <location>
        <position position="820"/>
    </location>
    <ligand>
        <name>Mg(2+)</name>
        <dbReference type="ChEBI" id="CHEBI:18420"/>
        <label>3</label>
    </ligand>
</feature>
<feature type="binding site" evidence="1">
    <location>
        <position position="820"/>
    </location>
    <ligand>
        <name>Mn(2+)</name>
        <dbReference type="ChEBI" id="CHEBI:29035"/>
        <label>3</label>
    </ligand>
</feature>
<feature type="binding site" evidence="1">
    <location>
        <position position="832"/>
    </location>
    <ligand>
        <name>ATP</name>
        <dbReference type="ChEBI" id="CHEBI:30616"/>
        <label>2</label>
    </ligand>
</feature>
<feature type="binding site" evidence="1">
    <location>
        <position position="832"/>
    </location>
    <ligand>
        <name>Mg(2+)</name>
        <dbReference type="ChEBI" id="CHEBI:18420"/>
        <label>3</label>
    </ligand>
</feature>
<feature type="binding site" evidence="1">
    <location>
        <position position="832"/>
    </location>
    <ligand>
        <name>Mg(2+)</name>
        <dbReference type="ChEBI" id="CHEBI:18420"/>
        <label>4</label>
    </ligand>
</feature>
<feature type="binding site" evidence="1">
    <location>
        <position position="832"/>
    </location>
    <ligand>
        <name>Mn(2+)</name>
        <dbReference type="ChEBI" id="CHEBI:29035"/>
        <label>3</label>
    </ligand>
</feature>
<feature type="binding site" evidence="1">
    <location>
        <position position="832"/>
    </location>
    <ligand>
        <name>Mn(2+)</name>
        <dbReference type="ChEBI" id="CHEBI:29035"/>
        <label>4</label>
    </ligand>
</feature>
<feature type="binding site" evidence="1">
    <location>
        <position position="834"/>
    </location>
    <ligand>
        <name>Mg(2+)</name>
        <dbReference type="ChEBI" id="CHEBI:18420"/>
        <label>4</label>
    </ligand>
</feature>
<feature type="binding site" evidence="1">
    <location>
        <position position="834"/>
    </location>
    <ligand>
        <name>Mn(2+)</name>
        <dbReference type="ChEBI" id="CHEBI:29035"/>
        <label>4</label>
    </ligand>
</feature>
<organism>
    <name type="scientific">Streptococcus equi subsp. equi (strain 4047)</name>
    <dbReference type="NCBI Taxonomy" id="553482"/>
    <lineage>
        <taxon>Bacteria</taxon>
        <taxon>Bacillati</taxon>
        <taxon>Bacillota</taxon>
        <taxon>Bacilli</taxon>
        <taxon>Lactobacillales</taxon>
        <taxon>Streptococcaceae</taxon>
        <taxon>Streptococcus</taxon>
    </lineage>
</organism>
<protein>
    <recommendedName>
        <fullName evidence="1">Carbamoyl phosphate synthase large chain</fullName>
        <ecNumber evidence="1">6.3.4.16</ecNumber>
        <ecNumber evidence="1">6.3.5.5</ecNumber>
    </recommendedName>
    <alternativeName>
        <fullName evidence="1">Carbamoyl phosphate synthetase ammonia chain</fullName>
    </alternativeName>
</protein>
<sequence length="1058" mass="116214">MAKRTDIKKIMVIGSGPIVIGQAAEFDYAGTQACLALKEEGYQVVLVNSNPATIMTDKEVADKVYIEPLTLAFVSRILRKERPDALLPTLGGQTGLNMAMELSKAGILQELGVELLGTTLSAIDQAEDRDLFKQLMKELGEPIPESEIVTTVEAAIGFANAIGYPVIVRPAFTLGGTGGGICSNEEVLRDIVENGLKLSPVTQCLIERSIAGFKEIEYEVMRDAADNALVVCSMENFDPVGIHTGDSIVFAPTQTLSDVENQLLRDASLRIIRALKIEGGCNVQLALDPNSFSYYVIEVNPRVSRSSALASKATGYPIAKIAAKIAVGLRLDDMLNPVTGTTYAMFEPALDYVVAKLPRFPFDKFERGERRLGTQMKATGEVMAIGRRIEECLLKACRSLEIGVHHNELKGLDTISDHELVAHIVRAQDDRLFYLSEALRRGYSIEELAGLTKIDLFFLDKLRHIVELEQDLIKKPVDIDLLIEAKRYGFSDQKIAELWQTDAASIRRLRRAYRVLPVYKMVDTCAAEFDSQTPYFYSTYEWENESIKSEKESVIVLGSGPIRIGQGVEFDYATVHSVKAIQAAGYEAIIMNSNPETVSTDFSISDKLYFEPLTFEEVMNVIELEQPKGVILQFGGQTAINLAEQLTKAGVPILGTQLEDLDCAEDRELFEKALKELGIPQPPGKTATNEAEALEAARAIGFPVLVRPSYVLGGRAMEIVENENDLRSYMKTAVKASPEHPVLIDSYILGKECEVDAISDGQSVLIPGIMEHIERAGVHSGDSMAVYPPQHLSKQVQDKIVDYTKRLAIGLNCIGMMNIQFVIQNEQVYVIEVNPRASRTVPFLSKVTNIPMAQVATKLILGQTLKDLGYQDGLYPESSLVHIKAPVFSFAKLAKVDSLLGPEMKSTGEVMGSDLTLEKALYKAFEASYLHMPEYGTIVFTIADDHKSEALILARRFSAIGYQIMATEGTAAFFADQGLDSQLVGKIGDNAHDIPALLRKGQIQAIINTVGTKRVTDKDGQMIRSSAIEQGVPLFTALDTAVAMLRVLESRTFSIEAI</sequence>
<keyword id="KW-0028">Amino-acid biosynthesis</keyword>
<keyword id="KW-0055">Arginine biosynthesis</keyword>
<keyword id="KW-0067">ATP-binding</keyword>
<keyword id="KW-0436">Ligase</keyword>
<keyword id="KW-0460">Magnesium</keyword>
<keyword id="KW-0464">Manganese</keyword>
<keyword id="KW-0479">Metal-binding</keyword>
<keyword id="KW-0547">Nucleotide-binding</keyword>
<keyword id="KW-0665">Pyrimidine biosynthesis</keyword>
<keyword id="KW-0677">Repeat</keyword>
<dbReference type="EC" id="6.3.4.16" evidence="1"/>
<dbReference type="EC" id="6.3.5.5" evidence="1"/>
<dbReference type="EMBL" id="FM204883">
    <property type="protein sequence ID" value="CAW94096.1"/>
    <property type="molecule type" value="Genomic_DNA"/>
</dbReference>
<dbReference type="RefSeq" id="WP_012679664.1">
    <property type="nucleotide sequence ID" value="NC_012471.1"/>
</dbReference>
<dbReference type="SMR" id="C0M756"/>
<dbReference type="KEGG" id="seu:SEQ_1313"/>
<dbReference type="HOGENOM" id="CLU_000513_1_2_9"/>
<dbReference type="OrthoDB" id="9804197at2"/>
<dbReference type="UniPathway" id="UPA00068">
    <property type="reaction ID" value="UER00171"/>
</dbReference>
<dbReference type="UniPathway" id="UPA00070">
    <property type="reaction ID" value="UER00115"/>
</dbReference>
<dbReference type="Proteomes" id="UP000001365">
    <property type="component" value="Chromosome"/>
</dbReference>
<dbReference type="GO" id="GO:0005737">
    <property type="term" value="C:cytoplasm"/>
    <property type="evidence" value="ECO:0007669"/>
    <property type="project" value="TreeGrafter"/>
</dbReference>
<dbReference type="GO" id="GO:0005524">
    <property type="term" value="F:ATP binding"/>
    <property type="evidence" value="ECO:0007669"/>
    <property type="project" value="UniProtKB-UniRule"/>
</dbReference>
<dbReference type="GO" id="GO:0004087">
    <property type="term" value="F:carbamoyl-phosphate synthase (ammonia) activity"/>
    <property type="evidence" value="ECO:0007669"/>
    <property type="project" value="RHEA"/>
</dbReference>
<dbReference type="GO" id="GO:0004088">
    <property type="term" value="F:carbamoyl-phosphate synthase (glutamine-hydrolyzing) activity"/>
    <property type="evidence" value="ECO:0007669"/>
    <property type="project" value="UniProtKB-UniRule"/>
</dbReference>
<dbReference type="GO" id="GO:0046872">
    <property type="term" value="F:metal ion binding"/>
    <property type="evidence" value="ECO:0007669"/>
    <property type="project" value="UniProtKB-KW"/>
</dbReference>
<dbReference type="GO" id="GO:0044205">
    <property type="term" value="P:'de novo' UMP biosynthetic process"/>
    <property type="evidence" value="ECO:0007669"/>
    <property type="project" value="UniProtKB-UniRule"/>
</dbReference>
<dbReference type="GO" id="GO:0006541">
    <property type="term" value="P:glutamine metabolic process"/>
    <property type="evidence" value="ECO:0007669"/>
    <property type="project" value="TreeGrafter"/>
</dbReference>
<dbReference type="GO" id="GO:0006526">
    <property type="term" value="P:L-arginine biosynthetic process"/>
    <property type="evidence" value="ECO:0007669"/>
    <property type="project" value="UniProtKB-UniRule"/>
</dbReference>
<dbReference type="CDD" id="cd01424">
    <property type="entry name" value="MGS_CPS_II"/>
    <property type="match status" value="1"/>
</dbReference>
<dbReference type="FunFam" id="1.10.1030.10:FF:000002">
    <property type="entry name" value="Carbamoyl-phosphate synthase large chain"/>
    <property type="match status" value="1"/>
</dbReference>
<dbReference type="FunFam" id="3.30.1490.20:FF:000001">
    <property type="entry name" value="Carbamoyl-phosphate synthase large chain"/>
    <property type="match status" value="1"/>
</dbReference>
<dbReference type="FunFam" id="3.30.470.20:FF:000001">
    <property type="entry name" value="Carbamoyl-phosphate synthase large chain"/>
    <property type="match status" value="1"/>
</dbReference>
<dbReference type="FunFam" id="3.30.470.20:FF:000026">
    <property type="entry name" value="Carbamoyl-phosphate synthase large chain"/>
    <property type="match status" value="1"/>
</dbReference>
<dbReference type="FunFam" id="3.40.50.20:FF:000001">
    <property type="entry name" value="Carbamoyl-phosphate synthase large chain"/>
    <property type="match status" value="2"/>
</dbReference>
<dbReference type="Gene3D" id="3.40.50.20">
    <property type="match status" value="2"/>
</dbReference>
<dbReference type="Gene3D" id="3.30.1490.20">
    <property type="entry name" value="ATP-grasp fold, A domain"/>
    <property type="match status" value="1"/>
</dbReference>
<dbReference type="Gene3D" id="3.30.470.20">
    <property type="entry name" value="ATP-grasp fold, B domain"/>
    <property type="match status" value="2"/>
</dbReference>
<dbReference type="Gene3D" id="1.10.1030.10">
    <property type="entry name" value="Carbamoyl-phosphate synthetase, large subunit oligomerisation domain"/>
    <property type="match status" value="1"/>
</dbReference>
<dbReference type="Gene3D" id="3.40.50.1380">
    <property type="entry name" value="Methylglyoxal synthase-like domain"/>
    <property type="match status" value="1"/>
</dbReference>
<dbReference type="HAMAP" id="MF_01210_A">
    <property type="entry name" value="CPSase_L_chain_A"/>
    <property type="match status" value="1"/>
</dbReference>
<dbReference type="HAMAP" id="MF_01210_B">
    <property type="entry name" value="CPSase_L_chain_B"/>
    <property type="match status" value="1"/>
</dbReference>
<dbReference type="InterPro" id="IPR011761">
    <property type="entry name" value="ATP-grasp"/>
</dbReference>
<dbReference type="InterPro" id="IPR013815">
    <property type="entry name" value="ATP_grasp_subdomain_1"/>
</dbReference>
<dbReference type="InterPro" id="IPR006275">
    <property type="entry name" value="CarbamoylP_synth_lsu"/>
</dbReference>
<dbReference type="InterPro" id="IPR005480">
    <property type="entry name" value="CarbamoylP_synth_lsu_oligo"/>
</dbReference>
<dbReference type="InterPro" id="IPR036897">
    <property type="entry name" value="CarbamoylP_synth_lsu_oligo_sf"/>
</dbReference>
<dbReference type="InterPro" id="IPR005479">
    <property type="entry name" value="CbamoylP_synth_lsu-like_ATP-bd"/>
</dbReference>
<dbReference type="InterPro" id="IPR005483">
    <property type="entry name" value="CbamoylP_synth_lsu_CPSase_dom"/>
</dbReference>
<dbReference type="InterPro" id="IPR011607">
    <property type="entry name" value="MGS-like_dom"/>
</dbReference>
<dbReference type="InterPro" id="IPR036914">
    <property type="entry name" value="MGS-like_dom_sf"/>
</dbReference>
<dbReference type="InterPro" id="IPR033937">
    <property type="entry name" value="MGS_CPS_CarB"/>
</dbReference>
<dbReference type="InterPro" id="IPR016185">
    <property type="entry name" value="PreATP-grasp_dom_sf"/>
</dbReference>
<dbReference type="NCBIfam" id="TIGR01369">
    <property type="entry name" value="CPSaseII_lrg"/>
    <property type="match status" value="1"/>
</dbReference>
<dbReference type="NCBIfam" id="NF003671">
    <property type="entry name" value="PRK05294.1"/>
    <property type="match status" value="1"/>
</dbReference>
<dbReference type="NCBIfam" id="NF009455">
    <property type="entry name" value="PRK12815.1"/>
    <property type="match status" value="1"/>
</dbReference>
<dbReference type="PANTHER" id="PTHR11405:SF53">
    <property type="entry name" value="CARBAMOYL-PHOSPHATE SYNTHASE [AMMONIA], MITOCHONDRIAL"/>
    <property type="match status" value="1"/>
</dbReference>
<dbReference type="PANTHER" id="PTHR11405">
    <property type="entry name" value="CARBAMOYLTRANSFERASE FAMILY MEMBER"/>
    <property type="match status" value="1"/>
</dbReference>
<dbReference type="Pfam" id="PF02786">
    <property type="entry name" value="CPSase_L_D2"/>
    <property type="match status" value="2"/>
</dbReference>
<dbReference type="Pfam" id="PF02787">
    <property type="entry name" value="CPSase_L_D3"/>
    <property type="match status" value="1"/>
</dbReference>
<dbReference type="Pfam" id="PF02142">
    <property type="entry name" value="MGS"/>
    <property type="match status" value="1"/>
</dbReference>
<dbReference type="PRINTS" id="PR00098">
    <property type="entry name" value="CPSASE"/>
</dbReference>
<dbReference type="SMART" id="SM01096">
    <property type="entry name" value="CPSase_L_D3"/>
    <property type="match status" value="1"/>
</dbReference>
<dbReference type="SMART" id="SM01209">
    <property type="entry name" value="GARS_A"/>
    <property type="match status" value="1"/>
</dbReference>
<dbReference type="SMART" id="SM00851">
    <property type="entry name" value="MGS"/>
    <property type="match status" value="1"/>
</dbReference>
<dbReference type="SUPFAM" id="SSF48108">
    <property type="entry name" value="Carbamoyl phosphate synthetase, large subunit connection domain"/>
    <property type="match status" value="1"/>
</dbReference>
<dbReference type="SUPFAM" id="SSF56059">
    <property type="entry name" value="Glutathione synthetase ATP-binding domain-like"/>
    <property type="match status" value="2"/>
</dbReference>
<dbReference type="SUPFAM" id="SSF52335">
    <property type="entry name" value="Methylglyoxal synthase-like"/>
    <property type="match status" value="1"/>
</dbReference>
<dbReference type="SUPFAM" id="SSF52440">
    <property type="entry name" value="PreATP-grasp domain"/>
    <property type="match status" value="2"/>
</dbReference>
<dbReference type="PROSITE" id="PS50975">
    <property type="entry name" value="ATP_GRASP"/>
    <property type="match status" value="2"/>
</dbReference>
<dbReference type="PROSITE" id="PS00866">
    <property type="entry name" value="CPSASE_1"/>
    <property type="match status" value="2"/>
</dbReference>
<dbReference type="PROSITE" id="PS00867">
    <property type="entry name" value="CPSASE_2"/>
    <property type="match status" value="2"/>
</dbReference>
<dbReference type="PROSITE" id="PS51855">
    <property type="entry name" value="MGS"/>
    <property type="match status" value="1"/>
</dbReference>